<reference key="1">
    <citation type="journal article" date="2004" name="Proc. Natl. Acad. Sci. U.S.A.">
        <title>The louse-borne human pathogen Bartonella quintana is a genomic derivative of the zoonotic agent Bartonella henselae.</title>
        <authorList>
            <person name="Alsmark U.C.M."/>
            <person name="Frank A.C."/>
            <person name="Karlberg E.O."/>
            <person name="Legault B.-A."/>
            <person name="Ardell D.H."/>
            <person name="Canbaeck B."/>
            <person name="Eriksson A.-S."/>
            <person name="Naeslund A.K."/>
            <person name="Handley S.A."/>
            <person name="Huvet M."/>
            <person name="La Scola B."/>
            <person name="Holmberg M."/>
            <person name="Andersson S.G.E."/>
        </authorList>
    </citation>
    <scope>NUCLEOTIDE SEQUENCE [LARGE SCALE GENOMIC DNA]</scope>
    <source>
        <strain>Toulouse</strain>
    </source>
</reference>
<gene>
    <name evidence="1" type="primary">tatA</name>
    <name type="ordered locus">BQ04740</name>
</gene>
<keyword id="KW-0997">Cell inner membrane</keyword>
<keyword id="KW-1003">Cell membrane</keyword>
<keyword id="KW-0472">Membrane</keyword>
<keyword id="KW-0653">Protein transport</keyword>
<keyword id="KW-0811">Translocation</keyword>
<keyword id="KW-0812">Transmembrane</keyword>
<keyword id="KW-1133">Transmembrane helix</keyword>
<keyword id="KW-0813">Transport</keyword>
<proteinExistence type="inferred from homology"/>
<feature type="chain" id="PRO_1000071808" description="Sec-independent protein translocase protein TatA">
    <location>
        <begin position="1"/>
        <end position="103"/>
    </location>
</feature>
<feature type="transmembrane region" description="Helical" evidence="1">
    <location>
        <begin position="1"/>
        <end position="21"/>
    </location>
</feature>
<feature type="region of interest" description="Disordered" evidence="2">
    <location>
        <begin position="60"/>
        <end position="103"/>
    </location>
</feature>
<organism>
    <name type="scientific">Bartonella quintana (strain Toulouse)</name>
    <name type="common">Rochalimaea quintana</name>
    <dbReference type="NCBI Taxonomy" id="283165"/>
    <lineage>
        <taxon>Bacteria</taxon>
        <taxon>Pseudomonadati</taxon>
        <taxon>Pseudomonadota</taxon>
        <taxon>Alphaproteobacteria</taxon>
        <taxon>Hyphomicrobiales</taxon>
        <taxon>Bartonellaceae</taxon>
        <taxon>Bartonella</taxon>
    </lineage>
</organism>
<sequence length="103" mass="11421">MGNIFSPTHLIVILLIVLVLFGRGKVSELMGDVAKGIKAFKKNMKEEGELLEDKLEMSDYSKTTDVRPQQSQPLSVKRAAERRKGSSSFKEGKASVAKKQRGK</sequence>
<name>TATA_BARQU</name>
<evidence type="ECO:0000255" key="1">
    <source>
        <dbReference type="HAMAP-Rule" id="MF_00236"/>
    </source>
</evidence>
<evidence type="ECO:0000256" key="2">
    <source>
        <dbReference type="SAM" id="MobiDB-lite"/>
    </source>
</evidence>
<dbReference type="EMBL" id="BX897700">
    <property type="protein sequence ID" value="CAF25973.1"/>
    <property type="molecule type" value="Genomic_DNA"/>
</dbReference>
<dbReference type="RefSeq" id="WP_011179259.1">
    <property type="nucleotide sequence ID" value="NC_005955.1"/>
</dbReference>
<dbReference type="SMR" id="Q6G039"/>
<dbReference type="GeneID" id="56533158"/>
<dbReference type="KEGG" id="bqu:BQ04740"/>
<dbReference type="eggNOG" id="COG1826">
    <property type="taxonomic scope" value="Bacteria"/>
</dbReference>
<dbReference type="HOGENOM" id="CLU_086034_5_0_5"/>
<dbReference type="OrthoDB" id="7161179at2"/>
<dbReference type="Proteomes" id="UP000000597">
    <property type="component" value="Chromosome"/>
</dbReference>
<dbReference type="GO" id="GO:0033281">
    <property type="term" value="C:TAT protein transport complex"/>
    <property type="evidence" value="ECO:0007669"/>
    <property type="project" value="UniProtKB-UniRule"/>
</dbReference>
<dbReference type="GO" id="GO:0008320">
    <property type="term" value="F:protein transmembrane transporter activity"/>
    <property type="evidence" value="ECO:0007669"/>
    <property type="project" value="UniProtKB-UniRule"/>
</dbReference>
<dbReference type="GO" id="GO:0043953">
    <property type="term" value="P:protein transport by the Tat complex"/>
    <property type="evidence" value="ECO:0007669"/>
    <property type="project" value="UniProtKB-UniRule"/>
</dbReference>
<dbReference type="Gene3D" id="1.20.5.3310">
    <property type="match status" value="1"/>
</dbReference>
<dbReference type="HAMAP" id="MF_00236">
    <property type="entry name" value="TatA_E"/>
    <property type="match status" value="1"/>
</dbReference>
<dbReference type="InterPro" id="IPR003369">
    <property type="entry name" value="TatA/B/E"/>
</dbReference>
<dbReference type="InterPro" id="IPR006312">
    <property type="entry name" value="TatA/E"/>
</dbReference>
<dbReference type="NCBIfam" id="TIGR01411">
    <property type="entry name" value="tatAE"/>
    <property type="match status" value="1"/>
</dbReference>
<dbReference type="PANTHER" id="PTHR42982">
    <property type="entry name" value="SEC-INDEPENDENT PROTEIN TRANSLOCASE PROTEIN TATA"/>
    <property type="match status" value="1"/>
</dbReference>
<dbReference type="PANTHER" id="PTHR42982:SF1">
    <property type="entry name" value="SEC-INDEPENDENT PROTEIN TRANSLOCASE PROTEIN TATA"/>
    <property type="match status" value="1"/>
</dbReference>
<dbReference type="Pfam" id="PF02416">
    <property type="entry name" value="TatA_B_E"/>
    <property type="match status" value="1"/>
</dbReference>
<protein>
    <recommendedName>
        <fullName evidence="1">Sec-independent protein translocase protein TatA</fullName>
    </recommendedName>
</protein>
<comment type="function">
    <text evidence="1">Part of the twin-arginine translocation (Tat) system that transports large folded proteins containing a characteristic twin-arginine motif in their signal peptide across membranes. TatA could form the protein-conducting channel of the Tat system.</text>
</comment>
<comment type="subunit">
    <text evidence="1">The Tat system comprises two distinct complexes: a TatABC complex, containing multiple copies of TatA, TatB and TatC subunits, and a separate TatA complex, containing only TatA subunits. Substrates initially bind to the TatABC complex, which probably triggers association of the separate TatA complex to form the active translocon.</text>
</comment>
<comment type="subcellular location">
    <subcellularLocation>
        <location evidence="1">Cell inner membrane</location>
        <topology evidence="1">Single-pass membrane protein</topology>
    </subcellularLocation>
</comment>
<comment type="similarity">
    <text evidence="1">Belongs to the TatA/E family.</text>
</comment>
<accession>Q6G039</accession>